<comment type="function">
    <text evidence="3 4 5 6">Formation of phosphoenolpyruvate. May be involved in regulating the flux of carbon into starch and fatty acids of seeds and in the remobilization of nitrogen reserves in senescing leaves.</text>
</comment>
<comment type="catalytic activity">
    <reaction evidence="5 6">
        <text>pyruvate + phosphate + ATP = phosphoenolpyruvate + AMP + diphosphate + H(+)</text>
        <dbReference type="Rhea" id="RHEA:10756"/>
        <dbReference type="ChEBI" id="CHEBI:15361"/>
        <dbReference type="ChEBI" id="CHEBI:15378"/>
        <dbReference type="ChEBI" id="CHEBI:30616"/>
        <dbReference type="ChEBI" id="CHEBI:33019"/>
        <dbReference type="ChEBI" id="CHEBI:43474"/>
        <dbReference type="ChEBI" id="CHEBI:58702"/>
        <dbReference type="ChEBI" id="CHEBI:456215"/>
        <dbReference type="EC" id="2.7.9.1"/>
    </reaction>
</comment>
<comment type="cofactor">
    <cofactor evidence="2">
        <name>Mg(2+)</name>
        <dbReference type="ChEBI" id="CHEBI:18420"/>
    </cofactor>
</comment>
<comment type="activity regulation">
    <text evidence="2">Activated by light-induced dephosphorylation. Inhibited by dark-induced phosphorylation. Both reactions are catalyzed by PDRP1.</text>
</comment>
<comment type="biophysicochemical properties">
    <kinetics>
        <KM evidence="5">17 uM for pyruvate</KM>
        <KM evidence="5">292 uM for phosphoenolpyruvate</KM>
    </kinetics>
</comment>
<comment type="subunit">
    <text evidence="2 6">Homotetramer. Interacts with RP1 and RP2.</text>
</comment>
<comment type="subcellular location">
    <subcellularLocation>
        <location evidence="4">Plastid</location>
        <location evidence="4">Chloroplast</location>
    </subcellularLocation>
    <subcellularLocation>
        <location evidence="4">Cytoplasm</location>
    </subcellularLocation>
    <text>Isoform 1 is targeted to the chloroplast while isoform 2 is found in the cytoplasm.</text>
</comment>
<comment type="alternative products">
    <event type="alternative promoter"/>
    <event type="alternative splicing"/>
    <isoform>
        <id>O23404-1</id>
        <name>1</name>
        <sequence type="displayed"/>
    </isoform>
    <isoform>
        <id>O23404-2</id>
        <name>2</name>
        <sequence type="described" ref="VSP_034604 VSP_034606"/>
    </isoform>
    <isoform>
        <id>O23404-3</id>
        <name>3</name>
        <sequence type="described" ref="VSP_034605"/>
    </isoform>
    <isoform>
        <id>O23404-4</id>
        <name>4</name>
        <sequence type="described" ref="VSP_034603"/>
    </isoform>
    <text>One additional alternative promoter may be used. According to EST data.</text>
</comment>
<comment type="tissue specificity">
    <text evidence="4">Isoform 1 is expressed in leaves, flowers and siliques. Isoform 2 is found in cotyledons, rosette and cauline leaves, petioles, flowers and siliques.</text>
</comment>
<comment type="developmental stage">
    <text evidence="4">Both isoforms 1 and 2 increase up to 7 days after sowing, but then decline.</text>
</comment>
<comment type="induction">
    <text evidence="3 4">Isoform 2, but not isoform 1, is induced during darkness.</text>
</comment>
<comment type="domain">
    <text evidence="6">The catalytic core domain alone is sufficient for the binding to PDRP1 but not for the binding to PDRP2.</text>
</comment>
<comment type="domain">
    <text evidence="2">The N-terminal domain contains the ATP/Pi binding site, the central domain the pyrophosphate/phosphate carrier histidine, and the C-terminal domain the pyruvate binding site.</text>
</comment>
<comment type="PTM">
    <text evidence="2">Phosphorylation of Thr-543 in the dark inactivates the enzyme. Dephosphorylation upon light stimulation reactivates the enzyme.</text>
</comment>
<comment type="miscellaneous">
    <text evidence="2">The reaction takes place in three steps, mediated by a phosphocarrier histidine residue located on the surface of the central domain. The two first partial reactions are catalyzed at an active site located on the N-terminal domain, and the third partial reaction is catalyzed at an active site located on the C-terminal domain. For catalytic turnover, the central domain swivels from the concave surface of the N-terminal domain to that of the C-terminal domain.</text>
</comment>
<comment type="miscellaneous">
    <molecule>Isoform 1</molecule>
    <text>Translation of the sequence shown in PubMed:16915520 was N-terminally extended.</text>
</comment>
<comment type="miscellaneous">
    <molecule>Isoform 2</molecule>
    <text evidence="9">Produced by alternative promoter usage. Cytoplasmic.</text>
</comment>
<comment type="miscellaneous">
    <molecule>Isoform 3</molecule>
    <text evidence="9">Produced by alternative splicing of isoform 1.</text>
</comment>
<comment type="miscellaneous">
    <molecule>Isoform 4</molecule>
    <text evidence="9">Produced by alternative splicing of isoform 1.</text>
</comment>
<comment type="similarity">
    <text evidence="9">Belongs to the PEP-utilizing enzyme family.</text>
</comment>
<comment type="sequence caution" evidence="9">
    <conflict type="erroneous gene model prediction">
        <sequence resource="EMBL-CDS" id="CAB10331"/>
    </conflict>
</comment>
<comment type="sequence caution" evidence="9">
    <conflict type="erroneous gene model prediction">
        <sequence resource="EMBL-CDS" id="CAB78595"/>
    </conflict>
</comment>
<feature type="transit peptide" description="Chloroplast" evidence="11">
    <location>
        <begin position="1"/>
        <end position="76"/>
    </location>
</feature>
<feature type="chain" id="PRO_0000343515" description="Pyruvate, phosphate dikinase 1, chloroplastic">
    <location>
        <begin position="77"/>
        <end position="963"/>
    </location>
</feature>
<feature type="active site" description="Tele-phosphohistidine intermediate" evidence="2">
    <location>
        <position position="545"/>
    </location>
</feature>
<feature type="active site" description="Proton donor" evidence="2">
    <location>
        <position position="922"/>
    </location>
</feature>
<feature type="binding site" evidence="2">
    <location>
        <position position="651"/>
    </location>
    <ligand>
        <name>substrate</name>
    </ligand>
</feature>
<feature type="binding site" evidence="2">
    <location>
        <position position="707"/>
    </location>
    <ligand>
        <name>substrate</name>
    </ligand>
</feature>
<feature type="binding site" evidence="1 2">
    <location>
        <position position="836"/>
    </location>
    <ligand>
        <name>Mg(2+)</name>
        <dbReference type="ChEBI" id="CHEBI:18420"/>
    </ligand>
</feature>
<feature type="binding site" evidence="2">
    <location>
        <position position="836"/>
    </location>
    <ligand>
        <name>substrate</name>
    </ligand>
</feature>
<feature type="binding site" evidence="2">
    <location>
        <position position="857"/>
    </location>
    <ligand>
        <name>substrate</name>
    </ligand>
</feature>
<feature type="binding site" evidence="2">
    <location>
        <position position="858"/>
    </location>
    <ligand>
        <name>substrate</name>
    </ligand>
</feature>
<feature type="binding site" evidence="2">
    <location>
        <position position="859"/>
    </location>
    <ligand>
        <name>substrate</name>
    </ligand>
</feature>
<feature type="binding site" evidence="2">
    <location>
        <position position="860"/>
    </location>
    <ligand>
        <name>Mg(2+)</name>
        <dbReference type="ChEBI" id="CHEBI:18420"/>
    </ligand>
</feature>
<feature type="binding site" evidence="2">
    <location>
        <position position="860"/>
    </location>
    <ligand>
        <name>substrate</name>
    </ligand>
</feature>
<feature type="modified residue" description="Phosphothreonine; by PDRP1" evidence="10">
    <location>
        <position position="543"/>
    </location>
</feature>
<feature type="splice variant" id="VSP_034603" description="In isoform 4." evidence="9">
    <location>
        <begin position="1"/>
        <end position="106"/>
    </location>
</feature>
<feature type="splice variant" id="VSP_034604" description="In isoform 2." evidence="7">
    <location>
        <begin position="1"/>
        <end position="88"/>
    </location>
</feature>
<feature type="splice variant" id="VSP_034605" description="In isoform 3." evidence="8">
    <location>
        <begin position="1"/>
        <end position="7"/>
    </location>
</feature>
<feature type="splice variant" id="VSP_034606" description="In isoform 2." evidence="7">
    <original>AQK</original>
    <variation>MMQ</variation>
    <location>
        <begin position="89"/>
        <end position="91"/>
    </location>
</feature>
<feature type="mutagenesis site" description="Loss of phosphorylation." evidence="6">
    <original>T</original>
    <variation>D</variation>
    <location>
        <position position="543"/>
    </location>
</feature>
<evidence type="ECO:0000250" key="1"/>
<evidence type="ECO:0000250" key="2">
    <source>
        <dbReference type="UniProtKB" id="P11155"/>
    </source>
</evidence>
<evidence type="ECO:0000269" key="3">
    <source>
    </source>
</evidence>
<evidence type="ECO:0000269" key="4">
    <source>
    </source>
</evidence>
<evidence type="ECO:0000269" key="5">
    <source>
    </source>
</evidence>
<evidence type="ECO:0000269" key="6">
    <source>
    </source>
</evidence>
<evidence type="ECO:0000303" key="7">
    <source>
    </source>
</evidence>
<evidence type="ECO:0000303" key="8">
    <source>
    </source>
</evidence>
<evidence type="ECO:0000305" key="9"/>
<evidence type="ECO:0007744" key="10">
    <source>
    </source>
</evidence>
<evidence type="ECO:0007744" key="11">
    <source>
    </source>
</evidence>
<name>PPDK1_ARATH</name>
<organism>
    <name type="scientific">Arabidopsis thaliana</name>
    <name type="common">Mouse-ear cress</name>
    <dbReference type="NCBI Taxonomy" id="3702"/>
    <lineage>
        <taxon>Eukaryota</taxon>
        <taxon>Viridiplantae</taxon>
        <taxon>Streptophyta</taxon>
        <taxon>Embryophyta</taxon>
        <taxon>Tracheophyta</taxon>
        <taxon>Spermatophyta</taxon>
        <taxon>Magnoliopsida</taxon>
        <taxon>eudicotyledons</taxon>
        <taxon>Gunneridae</taxon>
        <taxon>Pentapetalae</taxon>
        <taxon>rosids</taxon>
        <taxon>malvids</taxon>
        <taxon>Brassicales</taxon>
        <taxon>Brassicaceae</taxon>
        <taxon>Camelineae</taxon>
        <taxon>Arabidopsis</taxon>
    </lineage>
</organism>
<keyword id="KW-0877">Alternative promoter usage</keyword>
<keyword id="KW-0025">Alternative splicing</keyword>
<keyword id="KW-0067">ATP-binding</keyword>
<keyword id="KW-0150">Chloroplast</keyword>
<keyword id="KW-0963">Cytoplasm</keyword>
<keyword id="KW-0418">Kinase</keyword>
<keyword id="KW-0460">Magnesium</keyword>
<keyword id="KW-0479">Metal-binding</keyword>
<keyword id="KW-0547">Nucleotide-binding</keyword>
<keyword id="KW-0597">Phosphoprotein</keyword>
<keyword id="KW-0602">Photosynthesis</keyword>
<keyword id="KW-0934">Plastid</keyword>
<keyword id="KW-0670">Pyruvate</keyword>
<keyword id="KW-1185">Reference proteome</keyword>
<keyword id="KW-0808">Transferase</keyword>
<keyword id="KW-0809">Transit peptide</keyword>
<protein>
    <recommendedName>
        <fullName>Pyruvate, phosphate dikinase 1, chloroplastic</fullName>
        <ecNumber>2.7.9.1</ecNumber>
    </recommendedName>
    <alternativeName>
        <fullName>Pyruvate, orthophosphate dikinase 1</fullName>
    </alternativeName>
</protein>
<dbReference type="EC" id="2.7.9.1"/>
<dbReference type="EMBL" id="Z97339">
    <property type="protein sequence ID" value="CAB10331.1"/>
    <property type="status" value="ALT_SEQ"/>
    <property type="molecule type" value="Genomic_DNA"/>
</dbReference>
<dbReference type="EMBL" id="AL161541">
    <property type="protein sequence ID" value="CAB78595.1"/>
    <property type="status" value="ALT_SEQ"/>
    <property type="molecule type" value="Genomic_DNA"/>
</dbReference>
<dbReference type="EMBL" id="CP002687">
    <property type="protein sequence ID" value="AEE83616.1"/>
    <property type="molecule type" value="Genomic_DNA"/>
</dbReference>
<dbReference type="EMBL" id="CP002687">
    <property type="protein sequence ID" value="AEE83617.1"/>
    <property type="molecule type" value="Genomic_DNA"/>
</dbReference>
<dbReference type="EMBL" id="CP002687">
    <property type="protein sequence ID" value="AEE83618.1"/>
    <property type="molecule type" value="Genomic_DNA"/>
</dbReference>
<dbReference type="EMBL" id="CP002687">
    <property type="protein sequence ID" value="AEE83619.1"/>
    <property type="molecule type" value="Genomic_DNA"/>
</dbReference>
<dbReference type="EMBL" id="CP002687">
    <property type="protein sequence ID" value="AEE83620.1"/>
    <property type="molecule type" value="Genomic_DNA"/>
</dbReference>
<dbReference type="EMBL" id="CP002687">
    <property type="protein sequence ID" value="AEE83621.1"/>
    <property type="molecule type" value="Genomic_DNA"/>
</dbReference>
<dbReference type="EMBL" id="CP002687">
    <property type="protein sequence ID" value="ANM67012.1"/>
    <property type="molecule type" value="Genomic_DNA"/>
</dbReference>
<dbReference type="EMBL" id="AK317187">
    <property type="protein sequence ID" value="BAH19872.1"/>
    <property type="molecule type" value="mRNA"/>
</dbReference>
<dbReference type="PIR" id="A71420">
    <property type="entry name" value="A71420"/>
</dbReference>
<dbReference type="RefSeq" id="NP_001031647.1">
    <molecule id="O23404-4"/>
    <property type="nucleotide sequence ID" value="NM_001036570.1"/>
</dbReference>
<dbReference type="RefSeq" id="NP_001078395.1">
    <molecule id="O23404-3"/>
    <property type="nucleotide sequence ID" value="NM_001084926.1"/>
</dbReference>
<dbReference type="RefSeq" id="NP_001078396.1">
    <molecule id="O23404-1"/>
    <property type="nucleotide sequence ID" value="NM_001084927.2"/>
</dbReference>
<dbReference type="RefSeq" id="NP_001118987.1">
    <molecule id="O23404-1"/>
    <property type="nucleotide sequence ID" value="NM_001125515.1"/>
</dbReference>
<dbReference type="RefSeq" id="NP_001328869.1">
    <molecule id="O23404-4"/>
    <property type="nucleotide sequence ID" value="NM_001341051.1"/>
</dbReference>
<dbReference type="RefSeq" id="NP_193288.2">
    <molecule id="O23404-2"/>
    <property type="nucleotide sequence ID" value="NM_117643.4"/>
</dbReference>
<dbReference type="RefSeq" id="NP_849391.2">
    <molecule id="O23404-3"/>
    <property type="nucleotide sequence ID" value="NM_179060.4"/>
</dbReference>
<dbReference type="SMR" id="O23404"/>
<dbReference type="BioGRID" id="12523">
    <property type="interactions" value="4"/>
</dbReference>
<dbReference type="FunCoup" id="O23404">
    <property type="interactions" value="372"/>
</dbReference>
<dbReference type="STRING" id="3702.O23404"/>
<dbReference type="iPTMnet" id="O23404"/>
<dbReference type="PaxDb" id="3702-AT4G15530.5"/>
<dbReference type="ProteomicsDB" id="249342">
    <molecule id="O23404-1"/>
</dbReference>
<dbReference type="EnsemblPlants" id="AT4G15530.1">
    <molecule id="O23404-3"/>
    <property type="protein sequence ID" value="AT4G15530.1"/>
    <property type="gene ID" value="AT4G15530"/>
</dbReference>
<dbReference type="EnsemblPlants" id="AT4G15530.2">
    <molecule id="O23404-2"/>
    <property type="protein sequence ID" value="AT4G15530.2"/>
    <property type="gene ID" value="AT4G15530"/>
</dbReference>
<dbReference type="EnsemblPlants" id="AT4G15530.3">
    <molecule id="O23404-4"/>
    <property type="protein sequence ID" value="AT4G15530.3"/>
    <property type="gene ID" value="AT4G15530"/>
</dbReference>
<dbReference type="EnsemblPlants" id="AT4G15530.4">
    <molecule id="O23404-3"/>
    <property type="protein sequence ID" value="AT4G15530.4"/>
    <property type="gene ID" value="AT4G15530"/>
</dbReference>
<dbReference type="EnsemblPlants" id="AT4G15530.5">
    <molecule id="O23404-1"/>
    <property type="protein sequence ID" value="AT4G15530.5"/>
    <property type="gene ID" value="AT4G15530"/>
</dbReference>
<dbReference type="EnsemblPlants" id="AT4G15530.6">
    <molecule id="O23404-1"/>
    <property type="protein sequence ID" value="AT4G15530.6"/>
    <property type="gene ID" value="AT4G15530"/>
</dbReference>
<dbReference type="EnsemblPlants" id="AT4G15530.7">
    <molecule id="O23404-4"/>
    <property type="protein sequence ID" value="AT4G15530.7"/>
    <property type="gene ID" value="AT4G15530"/>
</dbReference>
<dbReference type="GeneID" id="827226"/>
<dbReference type="Gramene" id="AT4G15530.1">
    <molecule id="O23404-3"/>
    <property type="protein sequence ID" value="AT4G15530.1"/>
    <property type="gene ID" value="AT4G15530"/>
</dbReference>
<dbReference type="Gramene" id="AT4G15530.2">
    <molecule id="O23404-2"/>
    <property type="protein sequence ID" value="AT4G15530.2"/>
    <property type="gene ID" value="AT4G15530"/>
</dbReference>
<dbReference type="Gramene" id="AT4G15530.3">
    <molecule id="O23404-4"/>
    <property type="protein sequence ID" value="AT4G15530.3"/>
    <property type="gene ID" value="AT4G15530"/>
</dbReference>
<dbReference type="Gramene" id="AT4G15530.4">
    <molecule id="O23404-3"/>
    <property type="protein sequence ID" value="AT4G15530.4"/>
    <property type="gene ID" value="AT4G15530"/>
</dbReference>
<dbReference type="Gramene" id="AT4G15530.5">
    <molecule id="O23404-1"/>
    <property type="protein sequence ID" value="AT4G15530.5"/>
    <property type="gene ID" value="AT4G15530"/>
</dbReference>
<dbReference type="Gramene" id="AT4G15530.6">
    <molecule id="O23404-1"/>
    <property type="protein sequence ID" value="AT4G15530.6"/>
    <property type="gene ID" value="AT4G15530"/>
</dbReference>
<dbReference type="Gramene" id="AT4G15530.7">
    <molecule id="O23404-4"/>
    <property type="protein sequence ID" value="AT4G15530.7"/>
    <property type="gene ID" value="AT4G15530"/>
</dbReference>
<dbReference type="KEGG" id="ath:AT4G15530"/>
<dbReference type="Araport" id="AT4G15530"/>
<dbReference type="TAIR" id="AT4G15530">
    <property type="gene designation" value="PPDK"/>
</dbReference>
<dbReference type="eggNOG" id="ENOG502QREJ">
    <property type="taxonomic scope" value="Eukaryota"/>
</dbReference>
<dbReference type="InParanoid" id="O23404"/>
<dbReference type="PhylomeDB" id="O23404"/>
<dbReference type="BioCyc" id="ARA:AT4G15530-MONOMER"/>
<dbReference type="BRENDA" id="2.7.11.32">
    <property type="organism ID" value="399"/>
</dbReference>
<dbReference type="SABIO-RK" id="O23404"/>
<dbReference type="PRO" id="PR:O23404"/>
<dbReference type="Proteomes" id="UP000006548">
    <property type="component" value="Chromosome 4"/>
</dbReference>
<dbReference type="ExpressionAtlas" id="O23404">
    <property type="expression patterns" value="baseline and differential"/>
</dbReference>
<dbReference type="GO" id="GO:0009507">
    <property type="term" value="C:chloroplast"/>
    <property type="evidence" value="ECO:0000314"/>
    <property type="project" value="TAIR"/>
</dbReference>
<dbReference type="GO" id="GO:0009570">
    <property type="term" value="C:chloroplast stroma"/>
    <property type="evidence" value="ECO:0007005"/>
    <property type="project" value="TAIR"/>
</dbReference>
<dbReference type="GO" id="GO:0005829">
    <property type="term" value="C:cytosol"/>
    <property type="evidence" value="ECO:0000314"/>
    <property type="project" value="TAIR"/>
</dbReference>
<dbReference type="GO" id="GO:0005524">
    <property type="term" value="F:ATP binding"/>
    <property type="evidence" value="ECO:0007669"/>
    <property type="project" value="UniProtKB-KW"/>
</dbReference>
<dbReference type="GO" id="GO:0016301">
    <property type="term" value="F:kinase activity"/>
    <property type="evidence" value="ECO:0007669"/>
    <property type="project" value="UniProtKB-KW"/>
</dbReference>
<dbReference type="GO" id="GO:0046872">
    <property type="term" value="F:metal ion binding"/>
    <property type="evidence" value="ECO:0007669"/>
    <property type="project" value="UniProtKB-KW"/>
</dbReference>
<dbReference type="GO" id="GO:0050242">
    <property type="term" value="F:pyruvate, phosphate dikinase activity"/>
    <property type="evidence" value="ECO:0007669"/>
    <property type="project" value="UniProtKB-EC"/>
</dbReference>
<dbReference type="GO" id="GO:0015979">
    <property type="term" value="P:photosynthesis"/>
    <property type="evidence" value="ECO:0007669"/>
    <property type="project" value="UniProtKB-KW"/>
</dbReference>
<dbReference type="FunFam" id="1.20.80.30:FF:000001">
    <property type="entry name" value="Pyruvate, phosphate dikinase"/>
    <property type="match status" value="1"/>
</dbReference>
<dbReference type="FunFam" id="3.20.20.60:FF:000040">
    <property type="entry name" value="Pyruvate, phosphate dikinase, chloroplastic"/>
    <property type="match status" value="1"/>
</dbReference>
<dbReference type="FunFam" id="3.30.470.20:FF:000038">
    <property type="entry name" value="Pyruvate, phosphate dikinase, chloroplastic"/>
    <property type="match status" value="1"/>
</dbReference>
<dbReference type="FunFam" id="3.50.30.10:FF:000009">
    <property type="entry name" value="Pyruvate, phosphate dikinase, chloroplastic"/>
    <property type="match status" value="1"/>
</dbReference>
<dbReference type="Gene3D" id="1.20.80.30">
    <property type="match status" value="1"/>
</dbReference>
<dbReference type="Gene3D" id="3.30.1490.20">
    <property type="entry name" value="ATP-grasp fold, A domain"/>
    <property type="match status" value="1"/>
</dbReference>
<dbReference type="Gene3D" id="3.30.470.20">
    <property type="entry name" value="ATP-grasp fold, B domain"/>
    <property type="match status" value="1"/>
</dbReference>
<dbReference type="Gene3D" id="3.20.20.60">
    <property type="entry name" value="Phosphoenolpyruvate-binding domains"/>
    <property type="match status" value="1"/>
</dbReference>
<dbReference type="Gene3D" id="3.50.30.10">
    <property type="entry name" value="Phosphohistidine domain"/>
    <property type="match status" value="1"/>
</dbReference>
<dbReference type="Gene3D" id="1.10.189.10">
    <property type="entry name" value="Pyruvate Phosphate Dikinase, domain 2"/>
    <property type="match status" value="1"/>
</dbReference>
<dbReference type="InterPro" id="IPR013815">
    <property type="entry name" value="ATP_grasp_subdomain_1"/>
</dbReference>
<dbReference type="InterPro" id="IPR008279">
    <property type="entry name" value="PEP-util_enz_mobile_dom"/>
</dbReference>
<dbReference type="InterPro" id="IPR018274">
    <property type="entry name" value="PEP_util_AS"/>
</dbReference>
<dbReference type="InterPro" id="IPR000121">
    <property type="entry name" value="PEP_util_C"/>
</dbReference>
<dbReference type="InterPro" id="IPR023151">
    <property type="entry name" value="PEP_util_CS"/>
</dbReference>
<dbReference type="InterPro" id="IPR036637">
    <property type="entry name" value="Phosphohistidine_dom_sf"/>
</dbReference>
<dbReference type="InterPro" id="IPR002192">
    <property type="entry name" value="PPDK_AMP/ATP-bd"/>
</dbReference>
<dbReference type="InterPro" id="IPR010121">
    <property type="entry name" value="Pyruvate_phosphate_dikinase"/>
</dbReference>
<dbReference type="InterPro" id="IPR015813">
    <property type="entry name" value="Pyrv/PenolPyrv_kinase-like_dom"/>
</dbReference>
<dbReference type="InterPro" id="IPR040442">
    <property type="entry name" value="Pyrv_kinase-like_dom_sf"/>
</dbReference>
<dbReference type="NCBIfam" id="NF004531">
    <property type="entry name" value="PRK05878.1"/>
    <property type="match status" value="1"/>
</dbReference>
<dbReference type="NCBIfam" id="TIGR01828">
    <property type="entry name" value="pyru_phos_dikin"/>
    <property type="match status" value="1"/>
</dbReference>
<dbReference type="PANTHER" id="PTHR22931">
    <property type="entry name" value="PHOSPHOENOLPYRUVATE DIKINASE-RELATED"/>
    <property type="match status" value="1"/>
</dbReference>
<dbReference type="PANTHER" id="PTHR22931:SF9">
    <property type="entry name" value="PYRUVATE, PHOSPHATE DIKINASE 1, CHLOROPLASTIC"/>
    <property type="match status" value="1"/>
</dbReference>
<dbReference type="Pfam" id="PF00391">
    <property type="entry name" value="PEP-utilizers"/>
    <property type="match status" value="1"/>
</dbReference>
<dbReference type="Pfam" id="PF02896">
    <property type="entry name" value="PEP-utilizers_C"/>
    <property type="match status" value="1"/>
</dbReference>
<dbReference type="Pfam" id="PF01326">
    <property type="entry name" value="PPDK_N"/>
    <property type="match status" value="3"/>
</dbReference>
<dbReference type="PIRSF" id="PIRSF000853">
    <property type="entry name" value="PPDK"/>
    <property type="match status" value="1"/>
</dbReference>
<dbReference type="SUPFAM" id="SSF56059">
    <property type="entry name" value="Glutathione synthetase ATP-binding domain-like"/>
    <property type="match status" value="1"/>
</dbReference>
<dbReference type="SUPFAM" id="SSF51621">
    <property type="entry name" value="Phosphoenolpyruvate/pyruvate domain"/>
    <property type="match status" value="1"/>
</dbReference>
<dbReference type="SUPFAM" id="SSF52009">
    <property type="entry name" value="Phosphohistidine domain"/>
    <property type="match status" value="1"/>
</dbReference>
<dbReference type="PROSITE" id="PS00742">
    <property type="entry name" value="PEP_ENZYMES_2"/>
    <property type="match status" value="1"/>
</dbReference>
<dbReference type="PROSITE" id="PS00370">
    <property type="entry name" value="PEP_ENZYMES_PHOS_SITE"/>
    <property type="match status" value="1"/>
</dbReference>
<gene>
    <name type="primary">PPDK</name>
    <name type="ordered locus">At4g15530</name>
    <name type="ORF">dl3805c</name>
    <name type="ORF">FCAALL.325</name>
</gene>
<reference key="1">
    <citation type="journal article" date="2006" name="Plant Mol. Biol.">
        <title>The Arabidopsis PPDK gene is transcribed from two promoters to produce differentially expressed transcripts responsible for cytosolic and plastidic proteins.</title>
        <authorList>
            <person name="Parsley K."/>
            <person name="Hibberd J.M."/>
        </authorList>
    </citation>
    <scope>NUCLEOTIDE SEQUENCE [MRNA] (ISOFORMS 1 AND 2)</scope>
    <scope>FUNCTION</scope>
    <scope>ALTERNATIVE PROMOTER USAGE</scope>
    <scope>TISSUE SPECIFICITY</scope>
    <scope>SUBCELLULAR LOCATION</scope>
    <scope>DEVELOPMENTAL STAGE</scope>
    <scope>INDUCTION</scope>
    <source>
        <strain>cv. Columbia</strain>
    </source>
</reference>
<reference key="2">
    <citation type="journal article" date="1998" name="Nature">
        <title>Analysis of 1.9 Mb of contiguous sequence from chromosome 4 of Arabidopsis thaliana.</title>
        <authorList>
            <person name="Bevan M."/>
            <person name="Bancroft I."/>
            <person name="Bent E."/>
            <person name="Love K."/>
            <person name="Goodman H.M."/>
            <person name="Dean C."/>
            <person name="Bergkamp R."/>
            <person name="Dirkse W."/>
            <person name="van Staveren M."/>
            <person name="Stiekema W."/>
            <person name="Drost L."/>
            <person name="Ridley P."/>
            <person name="Hudson S.-A."/>
            <person name="Patel K."/>
            <person name="Murphy G."/>
            <person name="Piffanelli P."/>
            <person name="Wedler H."/>
            <person name="Wedler E."/>
            <person name="Wambutt R."/>
            <person name="Weitzenegger T."/>
            <person name="Pohl T."/>
            <person name="Terryn N."/>
            <person name="Gielen J."/>
            <person name="Villarroel R."/>
            <person name="De Clercq R."/>
            <person name="van Montagu M."/>
            <person name="Lecharny A."/>
            <person name="Aubourg S."/>
            <person name="Gy I."/>
            <person name="Kreis M."/>
            <person name="Lao N."/>
            <person name="Kavanagh T."/>
            <person name="Hempel S."/>
            <person name="Kotter P."/>
            <person name="Entian K.-D."/>
            <person name="Rieger M."/>
            <person name="Schaefer M."/>
            <person name="Funk B."/>
            <person name="Mueller-Auer S."/>
            <person name="Silvey M."/>
            <person name="James R."/>
            <person name="Monfort A."/>
            <person name="Pons A."/>
            <person name="Puigdomenech P."/>
            <person name="Douka A."/>
            <person name="Voukelatou E."/>
            <person name="Milioni D."/>
            <person name="Hatzopoulos P."/>
            <person name="Piravandi E."/>
            <person name="Obermaier B."/>
            <person name="Hilbert H."/>
            <person name="Duesterhoeft A."/>
            <person name="Moores T."/>
            <person name="Jones J.D.G."/>
            <person name="Eneva T."/>
            <person name="Palme K."/>
            <person name="Benes V."/>
            <person name="Rechmann S."/>
            <person name="Ansorge W."/>
            <person name="Cooke R."/>
            <person name="Berger C."/>
            <person name="Delseny M."/>
            <person name="Voet M."/>
            <person name="Volckaert G."/>
            <person name="Mewes H.-W."/>
            <person name="Klosterman S."/>
            <person name="Schueller C."/>
            <person name="Chalwatzis N."/>
        </authorList>
    </citation>
    <scope>NUCLEOTIDE SEQUENCE [LARGE SCALE GENOMIC DNA]</scope>
    <source>
        <strain>cv. Columbia</strain>
    </source>
</reference>
<reference key="3">
    <citation type="journal article" date="1999" name="Nature">
        <title>Sequence and analysis of chromosome 4 of the plant Arabidopsis thaliana.</title>
        <authorList>
            <person name="Mayer K.F.X."/>
            <person name="Schueller C."/>
            <person name="Wambutt R."/>
            <person name="Murphy G."/>
            <person name="Volckaert G."/>
            <person name="Pohl T."/>
            <person name="Duesterhoeft A."/>
            <person name="Stiekema W."/>
            <person name="Entian K.-D."/>
            <person name="Terryn N."/>
            <person name="Harris B."/>
            <person name="Ansorge W."/>
            <person name="Brandt P."/>
            <person name="Grivell L.A."/>
            <person name="Rieger M."/>
            <person name="Weichselgartner M."/>
            <person name="de Simone V."/>
            <person name="Obermaier B."/>
            <person name="Mache R."/>
            <person name="Mueller M."/>
            <person name="Kreis M."/>
            <person name="Delseny M."/>
            <person name="Puigdomenech P."/>
            <person name="Watson M."/>
            <person name="Schmidtheini T."/>
            <person name="Reichert B."/>
            <person name="Portetelle D."/>
            <person name="Perez-Alonso M."/>
            <person name="Boutry M."/>
            <person name="Bancroft I."/>
            <person name="Vos P."/>
            <person name="Hoheisel J."/>
            <person name="Zimmermann W."/>
            <person name="Wedler H."/>
            <person name="Ridley P."/>
            <person name="Langham S.-A."/>
            <person name="McCullagh B."/>
            <person name="Bilham L."/>
            <person name="Robben J."/>
            <person name="van der Schueren J."/>
            <person name="Grymonprez B."/>
            <person name="Chuang Y.-J."/>
            <person name="Vandenbussche F."/>
            <person name="Braeken M."/>
            <person name="Weltjens I."/>
            <person name="Voet M."/>
            <person name="Bastiaens I."/>
            <person name="Aert R."/>
            <person name="Defoor E."/>
            <person name="Weitzenegger T."/>
            <person name="Bothe G."/>
            <person name="Ramsperger U."/>
            <person name="Hilbert H."/>
            <person name="Braun M."/>
            <person name="Holzer E."/>
            <person name="Brandt A."/>
            <person name="Peters S."/>
            <person name="van Staveren M."/>
            <person name="Dirkse W."/>
            <person name="Mooijman P."/>
            <person name="Klein Lankhorst R."/>
            <person name="Rose M."/>
            <person name="Hauf J."/>
            <person name="Koetter P."/>
            <person name="Berneiser S."/>
            <person name="Hempel S."/>
            <person name="Feldpausch M."/>
            <person name="Lamberth S."/>
            <person name="Van den Daele H."/>
            <person name="De Keyser A."/>
            <person name="Buysshaert C."/>
            <person name="Gielen J."/>
            <person name="Villarroel R."/>
            <person name="De Clercq R."/>
            <person name="van Montagu M."/>
            <person name="Rogers J."/>
            <person name="Cronin A."/>
            <person name="Quail M.A."/>
            <person name="Bray-Allen S."/>
            <person name="Clark L."/>
            <person name="Doggett J."/>
            <person name="Hall S."/>
            <person name="Kay M."/>
            <person name="Lennard N."/>
            <person name="McLay K."/>
            <person name="Mayes R."/>
            <person name="Pettett A."/>
            <person name="Rajandream M.A."/>
            <person name="Lyne M."/>
            <person name="Benes V."/>
            <person name="Rechmann S."/>
            <person name="Borkova D."/>
            <person name="Bloecker H."/>
            <person name="Scharfe M."/>
            <person name="Grimm M."/>
            <person name="Loehnert T.-H."/>
            <person name="Dose S."/>
            <person name="de Haan M."/>
            <person name="Maarse A.C."/>
            <person name="Schaefer M."/>
            <person name="Mueller-Auer S."/>
            <person name="Gabel C."/>
            <person name="Fuchs M."/>
            <person name="Fartmann B."/>
            <person name="Granderath K."/>
            <person name="Dauner D."/>
            <person name="Herzl A."/>
            <person name="Neumann S."/>
            <person name="Argiriou A."/>
            <person name="Vitale D."/>
            <person name="Liguori R."/>
            <person name="Piravandi E."/>
            <person name="Massenet O."/>
            <person name="Quigley F."/>
            <person name="Clabauld G."/>
            <person name="Muendlein A."/>
            <person name="Felber R."/>
            <person name="Schnabl S."/>
            <person name="Hiller R."/>
            <person name="Schmidt W."/>
            <person name="Lecharny A."/>
            <person name="Aubourg S."/>
            <person name="Chefdor F."/>
            <person name="Cooke R."/>
            <person name="Berger C."/>
            <person name="Monfort A."/>
            <person name="Casacuberta E."/>
            <person name="Gibbons T."/>
            <person name="Weber N."/>
            <person name="Vandenbol M."/>
            <person name="Bargues M."/>
            <person name="Terol J."/>
            <person name="Torres A."/>
            <person name="Perez-Perez A."/>
            <person name="Purnelle B."/>
            <person name="Bent E."/>
            <person name="Johnson S."/>
            <person name="Tacon D."/>
            <person name="Jesse T."/>
            <person name="Heijnen L."/>
            <person name="Schwarz S."/>
            <person name="Scholler P."/>
            <person name="Heber S."/>
            <person name="Francs P."/>
            <person name="Bielke C."/>
            <person name="Frishman D."/>
            <person name="Haase D."/>
            <person name="Lemcke K."/>
            <person name="Mewes H.-W."/>
            <person name="Stocker S."/>
            <person name="Zaccaria P."/>
            <person name="Bevan M."/>
            <person name="Wilson R.K."/>
            <person name="de la Bastide M."/>
            <person name="Habermann K."/>
            <person name="Parnell L."/>
            <person name="Dedhia N."/>
            <person name="Gnoj L."/>
            <person name="Schutz K."/>
            <person name="Huang E."/>
            <person name="Spiegel L."/>
            <person name="Sekhon M."/>
            <person name="Murray J."/>
            <person name="Sheet P."/>
            <person name="Cordes M."/>
            <person name="Abu-Threideh J."/>
            <person name="Stoneking T."/>
            <person name="Kalicki J."/>
            <person name="Graves T."/>
            <person name="Harmon G."/>
            <person name="Edwards J."/>
            <person name="Latreille P."/>
            <person name="Courtney L."/>
            <person name="Cloud J."/>
            <person name="Abbott A."/>
            <person name="Scott K."/>
            <person name="Johnson D."/>
            <person name="Minx P."/>
            <person name="Bentley D."/>
            <person name="Fulton B."/>
            <person name="Miller N."/>
            <person name="Greco T."/>
            <person name="Kemp K."/>
            <person name="Kramer J."/>
            <person name="Fulton L."/>
            <person name="Mardis E."/>
            <person name="Dante M."/>
            <person name="Pepin K."/>
            <person name="Hillier L.W."/>
            <person name="Nelson J."/>
            <person name="Spieth J."/>
            <person name="Ryan E."/>
            <person name="Andrews S."/>
            <person name="Geisel C."/>
            <person name="Layman D."/>
            <person name="Du H."/>
            <person name="Ali J."/>
            <person name="Berghoff A."/>
            <person name="Jones K."/>
            <person name="Drone K."/>
            <person name="Cotton M."/>
            <person name="Joshu C."/>
            <person name="Antonoiu B."/>
            <person name="Zidanic M."/>
            <person name="Strong C."/>
            <person name="Sun H."/>
            <person name="Lamar B."/>
            <person name="Yordan C."/>
            <person name="Ma P."/>
            <person name="Zhong J."/>
            <person name="Preston R."/>
            <person name="Vil D."/>
            <person name="Shekher M."/>
            <person name="Matero A."/>
            <person name="Shah R."/>
            <person name="Swaby I.K."/>
            <person name="O'Shaughnessy A."/>
            <person name="Rodriguez M."/>
            <person name="Hoffman J."/>
            <person name="Till S."/>
            <person name="Granat S."/>
            <person name="Shohdy N."/>
            <person name="Hasegawa A."/>
            <person name="Hameed A."/>
            <person name="Lodhi M."/>
            <person name="Johnson A."/>
            <person name="Chen E."/>
            <person name="Marra M.A."/>
            <person name="Martienssen R."/>
            <person name="McCombie W.R."/>
        </authorList>
    </citation>
    <scope>NUCLEOTIDE SEQUENCE [LARGE SCALE GENOMIC DNA]</scope>
    <source>
        <strain>cv. Columbia</strain>
    </source>
</reference>
<reference key="4">
    <citation type="journal article" date="2017" name="Plant J.">
        <title>Araport11: a complete reannotation of the Arabidopsis thaliana reference genome.</title>
        <authorList>
            <person name="Cheng C.Y."/>
            <person name="Krishnakumar V."/>
            <person name="Chan A.P."/>
            <person name="Thibaud-Nissen F."/>
            <person name="Schobel S."/>
            <person name="Town C.D."/>
        </authorList>
    </citation>
    <scope>GENOME REANNOTATION</scope>
    <source>
        <strain>cv. Columbia</strain>
    </source>
</reference>
<reference key="5">
    <citation type="journal article" date="2009" name="DNA Res.">
        <title>Analysis of multiple occurrences of alternative splicing events in Arabidopsis thaliana using novel sequenced full-length cDNAs.</title>
        <authorList>
            <person name="Iida K."/>
            <person name="Fukami-Kobayashi K."/>
            <person name="Toyoda A."/>
            <person name="Sakaki Y."/>
            <person name="Kobayashi M."/>
            <person name="Seki M."/>
            <person name="Shinozaki K."/>
        </authorList>
    </citation>
    <scope>NUCLEOTIDE SEQUENCE [LARGE SCALE MRNA] (ISOFORM 3)</scope>
    <source>
        <strain>cv. Columbia</strain>
    </source>
</reference>
<reference key="6">
    <citation type="journal article" date="2004" name="Plant J.">
        <title>Molecular events in senescing Arabidopsis leaves.</title>
        <authorList>
            <person name="Lin J.F."/>
            <person name="Wu S.H."/>
        </authorList>
    </citation>
    <scope>FUNCTION</scope>
    <scope>INDUCTION</scope>
</reference>
<reference key="7">
    <citation type="journal article" date="2007" name="Mol. Cell. Proteomics">
        <title>Multidimensional protein identification technology (MudPIT) analysis of ubiquitinated proteins in plants.</title>
        <authorList>
            <person name="Maor R."/>
            <person name="Jones A."/>
            <person name="Nuehse T.S."/>
            <person name="Studholme D.J."/>
            <person name="Peck S.C."/>
            <person name="Shirasu K."/>
        </authorList>
    </citation>
    <scope>IDENTIFICATION BY MASS SPECTROMETRY [LARGE SCALE ANALYSIS]</scope>
    <source>
        <strain>cv. Landsberg erecta</strain>
    </source>
</reference>
<reference key="8">
    <citation type="journal article" date="2008" name="J. Proteome Res.">
        <title>Site-specific phosphorylation profiling of Arabidopsis proteins by mass spectrometry and peptide chip analysis.</title>
        <authorList>
            <person name="de la Fuente van Bentem S."/>
            <person name="Anrather D."/>
            <person name="Dohnal I."/>
            <person name="Roitinger E."/>
            <person name="Csaszar E."/>
            <person name="Joore J."/>
            <person name="Buijnink J."/>
            <person name="Carreri A."/>
            <person name="Forzani C."/>
            <person name="Lorkovic Z.J."/>
            <person name="Barta A."/>
            <person name="Lecourieux D."/>
            <person name="Verhounig A."/>
            <person name="Jonak C."/>
            <person name="Hirt H."/>
        </authorList>
    </citation>
    <scope>PHOSPHORYLATION [LARGE SCALE ANALYSIS] AT THR-543</scope>
    <scope>IDENTIFICATION BY MASS SPECTROMETRY [LARGE SCALE ANALYSIS]</scope>
    <source>
        <tissue>Root</tissue>
    </source>
</reference>
<reference key="9">
    <citation type="journal article" date="2009" name="J. Proteomics">
        <title>Phosphoproteomic analysis of nuclei-enriched fractions from Arabidopsis thaliana.</title>
        <authorList>
            <person name="Jones A.M.E."/>
            <person name="MacLean D."/>
            <person name="Studholme D.J."/>
            <person name="Serna-Sanz A."/>
            <person name="Andreasson E."/>
            <person name="Rathjen J.P."/>
            <person name="Peck S.C."/>
        </authorList>
    </citation>
    <scope>IDENTIFICATION BY MASS SPECTROMETRY [LARGE SCALE ANALYSIS]</scope>
    <source>
        <strain>cv. Columbia</strain>
    </source>
</reference>
<reference key="10">
    <citation type="journal article" date="2009" name="Plant Physiol.">
        <title>Large-scale Arabidopsis phosphoproteome profiling reveals novel chloroplast kinase substrates and phosphorylation networks.</title>
        <authorList>
            <person name="Reiland S."/>
            <person name="Messerli G."/>
            <person name="Baerenfaller K."/>
            <person name="Gerrits B."/>
            <person name="Endler A."/>
            <person name="Grossmann J."/>
            <person name="Gruissem W."/>
            <person name="Baginsky S."/>
        </authorList>
    </citation>
    <scope>IDENTIFICATION BY MASS SPECTROMETRY [LARGE SCALE ANALYSIS]</scope>
</reference>
<reference key="11">
    <citation type="journal article" date="2011" name="J. Exp. Bot.">
        <title>Functional evolution of C(4) pyruvate, orthophosphate dikinase.</title>
        <authorList>
            <person name="Chastain C.J."/>
            <person name="Failing C.J."/>
            <person name="Manandhar L."/>
            <person name="Zimmerman M.A."/>
            <person name="Lakner M.M."/>
            <person name="Nguyen T.H."/>
        </authorList>
    </citation>
    <scope>FUNCTION</scope>
    <scope>CATALYTIC ACTIVITY</scope>
    <scope>BIOPHYSICOCHEMICAL PROPERTIES</scope>
</reference>
<reference key="12">
    <citation type="journal article" date="2011" name="Plant J.">
        <title>The pyruvate, orthophosphate dikinase regulatory proteins of Arabidopsis are both bifunctional and interact with the catalytic and nucleotide-binding domains of pyruvate, orthophosphate dikinase.</title>
        <authorList>
            <person name="Astley H.M."/>
            <person name="Parsley K."/>
            <person name="Aubry S."/>
            <person name="Chastain C.J."/>
            <person name="Burnell J.N."/>
            <person name="Webb M.E."/>
            <person name="Hibberd J.M."/>
        </authorList>
    </citation>
    <scope>FUNCTION</scope>
    <scope>CATALYTIC ACTIVITY</scope>
    <scope>MUTAGENESIS OF THR-543</scope>
    <scope>INTERACTION WITH RP1 AND RP2</scope>
    <scope>DOMAIN</scope>
</reference>
<reference key="13">
    <citation type="journal article" date="2012" name="Mol. Cell. Proteomics">
        <title>Comparative large-scale characterisation of plant vs. mammal proteins reveals similar and idiosyncratic N-alpha acetylation features.</title>
        <authorList>
            <person name="Bienvenut W.V."/>
            <person name="Sumpton D."/>
            <person name="Martinez A."/>
            <person name="Lilla S."/>
            <person name="Espagne C."/>
            <person name="Meinnel T."/>
            <person name="Giglione C."/>
        </authorList>
    </citation>
    <scope>CLEAVAGE OF TRANSIT PEPTIDE [LARGE SCALE ANALYSIS] AFTER ALA-76</scope>
    <scope>IDENTIFICATION BY MASS SPECTROMETRY [LARGE SCALE ANALYSIS]</scope>
</reference>
<accession>O23404</accession>
<accession>B9DGK5</accession>
<accession>Q27GJ5</accession>
<accession>Q2V3I1</accession>
<accession>Q3EA16</accession>
<sequence length="963" mass="105138">MLYIRKKMTSMIVKTTPELFKGNGVFRTDHLGENRMVSRSNRLGDGSNRFPRTGTIHCQRLSIAKTGLHRETKARAILSPVSDPAASIAQKRVFTFGKGRSEGNKGMKSLLGGKGANLAEMASIGLSVPPGLTISTEACQQYQIAGKKLPEGLWEEILEGLSFIERDIGASLADPSKPLLLSVRSGAAISMPGMMDTVLNLGLNDQVVVGLAAKSGERFAYDSFRRFLDMFGDVVMGIPHAKFEEKLERMKERKGVKNDTDLSAADLKELVEQYKSVYLEAKGQEFPSDPKKQLELAIEAVFDSWDSPRANKYRSINQITGLKGTAVNIQCMVFGNMGDTSGTGVLFTRNPSTGEKKLYGEFLVNAQGEDVVAGIRTPEDLDTMKRFMPEAYAELVENCNILERHYKDMMDIEFTVQEERLWMLQCRAGKRTGKGAVKIAVDMVGEGLVEKSSAIKMVEPQHLDQLLHPQFHDPSGYREKVVAKGLPASPGAAVGQVVFTAEEAEAWHSQGKTVILVRTETSPDDVGGMHAAEGILTARGGMTSHAAVVARGWGKCCIAGCSEIRVDENHKVLLIGDLTINEGEWISMNGSTGEVILGKQALAPPALSPDLETFMSWADAIRRLKVMANADTPEDAIAARKNGAQGIGLCRTEHMFFGADRIKAVRKMIMAVTTEQRKASLDILLPYQRSDFEGIFRAMDGLPVTIRLLDPPLHEFLPEGDLDNIVHELAEETGVKEDEVLSRIEKLSEVNPMLGFRGCRLGISYPELTEMQARAIFEAAASMQDQGVTVIPEIMVPLVGTPQELGHQVDVIRKVAKKVFAEKGHTVSYKVGTMIEIPRAALIADEIAKEAEFFSFGTNDLTQMTFGYSRDDVGKFLPIYLAKGILQHDPFEVLDQQGVGQLIKMATEKGRAARPSLKVGICGEHGGDPSSVGFFAEAGLDYVSCSPFRVPIARLAAAQVVVA</sequence>
<proteinExistence type="evidence at protein level"/>